<gene>
    <name evidence="6" type="primary">pop3</name>
    <name evidence="7" type="synonym">wat1</name>
    <name evidence="10" type="ORF">SPBC21B10.05c</name>
</gene>
<comment type="function">
    <text evidence="1 3 4 5">component of both TORC1 and TORC2, which regulate multiple cellular processes to control cell growth in response to environmental signals. Nutrient limitation and environmental stress signals cause inactivation of TORC1. Active TORC1 positively controls cell growth and ribosome biogenesis by regulating ribosomal protein gene expression. TORC1 negatively controls G1 cell-cycle arrest, sexual development and amino acid uptake. Represses mating, meiosis and sporulation efficiency by interfering with the functions of the transcription factor ste11 and the meiosis-promoting RNA-binding protein mei2. TORC2 is required for cell survival under various stress conditions. TORC2 positively controls G1 cell-cycle arrest, sexual development and amino acid uptake. Positively regulates amino acid uptake through the control of expression of amino acid permeases (PubMed:17046992, PubMed:17261596, PubMed:18076573). May play a role in mRNA maturation as a coupling protein between splicing and synthesis and/or stabilization.</text>
</comment>
<comment type="subunit">
    <text evidence="1 3 4 5">The target of rapamycin complex 1 (TORC1) is composed of at least mip1, pop3/wat1, tco89, toc1 and tor2. The target of rapamycin complex 2 (TORC2) is composed of at least bit61, pop3/wat1, sin1, ste20 and tor1 (PubMed:17046992, PubMed:17261596, PubMed:18076573). Interacts with prp2 (PubMed:11686295).</text>
</comment>
<comment type="interaction">
    <interactant intactId="EBI-1564139">
        <id>O74184</id>
    </interactant>
    <interactant intactId="EBI-1024157">
        <id>P36629</id>
        <label>prp2</label>
    </interactant>
    <organismsDiffer>false</organismsDiffer>
    <experiments>4</experiments>
</comment>
<comment type="subcellular location">
    <subcellularLocation>
        <location evidence="2">Cytoplasm</location>
    </subcellularLocation>
    <subcellularLocation>
        <location evidence="2">Nucleus</location>
    </subcellularLocation>
</comment>
<comment type="similarity">
    <text evidence="8">Belongs to the WD repeat LST8 family.</text>
</comment>
<organism>
    <name type="scientific">Schizosaccharomyces pombe (strain 972 / ATCC 24843)</name>
    <name type="common">Fission yeast</name>
    <dbReference type="NCBI Taxonomy" id="284812"/>
    <lineage>
        <taxon>Eukaryota</taxon>
        <taxon>Fungi</taxon>
        <taxon>Dikarya</taxon>
        <taxon>Ascomycota</taxon>
        <taxon>Taphrinomycotina</taxon>
        <taxon>Schizosaccharomycetes</taxon>
        <taxon>Schizosaccharomycetales</taxon>
        <taxon>Schizosaccharomycetaceae</taxon>
        <taxon>Schizosaccharomyces</taxon>
    </lineage>
</organism>
<proteinExistence type="evidence at protein level"/>
<feature type="chain" id="PRO_0000051141" description="Target of rapamycin complex subunit wat1">
    <location>
        <begin position="1"/>
        <end position="314"/>
    </location>
</feature>
<feature type="repeat" description="WD 1">
    <location>
        <begin position="1"/>
        <end position="35"/>
    </location>
</feature>
<feature type="repeat" description="WD 2">
    <location>
        <begin position="38"/>
        <end position="76"/>
    </location>
</feature>
<feature type="repeat" description="WD 3">
    <location>
        <begin position="81"/>
        <end position="120"/>
    </location>
</feature>
<feature type="repeat" description="WD 4">
    <location>
        <begin position="122"/>
        <end position="161"/>
    </location>
</feature>
<feature type="repeat" description="WD 5">
    <location>
        <begin position="165"/>
        <end position="204"/>
    </location>
</feature>
<feature type="repeat" description="WD 6">
    <location>
        <begin position="213"/>
        <end position="252"/>
    </location>
</feature>
<feature type="repeat" description="WD 7">
    <location>
        <begin position="257"/>
        <end position="296"/>
    </location>
</feature>
<feature type="modified residue" description="Phosphoserine" evidence="5">
    <location>
        <position position="141"/>
    </location>
</feature>
<accession>O74184</accession>
<keyword id="KW-0131">Cell cycle</keyword>
<keyword id="KW-0963">Cytoplasm</keyword>
<keyword id="KW-0469">Meiosis</keyword>
<keyword id="KW-0539">Nucleus</keyword>
<keyword id="KW-0597">Phosphoprotein</keyword>
<keyword id="KW-1185">Reference proteome</keyword>
<keyword id="KW-0677">Repeat</keyword>
<keyword id="KW-0749">Sporulation</keyword>
<keyword id="KW-0853">WD repeat</keyword>
<evidence type="ECO:0000269" key="1">
    <source>
    </source>
</evidence>
<evidence type="ECO:0000269" key="2">
    <source>
    </source>
</evidence>
<evidence type="ECO:0000269" key="3">
    <source>
    </source>
</evidence>
<evidence type="ECO:0000269" key="4">
    <source>
    </source>
</evidence>
<evidence type="ECO:0000269" key="5">
    <source>
    </source>
</evidence>
<evidence type="ECO:0000303" key="6">
    <source>
    </source>
</evidence>
<evidence type="ECO:0000303" key="7">
    <source>
    </source>
</evidence>
<evidence type="ECO:0000305" key="8"/>
<evidence type="ECO:0000305" key="9">
    <source>
    </source>
</evidence>
<evidence type="ECO:0000312" key="10">
    <source>
        <dbReference type="PomBase" id="SPBC21B10.05c"/>
    </source>
</evidence>
<name>WAT1_SCHPO</name>
<protein>
    <recommendedName>
        <fullName evidence="9">Target of rapamycin complex subunit wat1</fullName>
        <shortName>TORC subunit wat1</shortName>
    </recommendedName>
    <alternativeName>
        <fullName>WD repeat-containing protein pop3</fullName>
    </alternativeName>
</protein>
<reference key="1">
    <citation type="journal article" date="1997" name="Mol. Gen. Genet.">
        <title>A wat1 mutant of fission yeast is defective in cell morphology.</title>
        <authorList>
            <person name="Kemp J.T."/>
            <person name="Balasubramanian M.K."/>
            <person name="Gould K.L."/>
        </authorList>
    </citation>
    <scope>NUCLEOTIDE SEQUENCE [GENOMIC DNA]</scope>
</reference>
<reference key="2">
    <citation type="journal article" date="2001" name="J. Cell Sci.">
        <title>Conserved Wat1/Pop3 WD-repeat protein of fission yeast secures genome stability through microtubule integrity and may be involved in mRNA maturation.</title>
        <authorList>
            <person name="Ochotorena I.L."/>
            <person name="Hirata D."/>
            <person name="Kominami K."/>
            <person name="Potashkin J."/>
            <person name="Sahin F."/>
            <person name="Wentz-Hunter K."/>
            <person name="Gould K.L."/>
            <person name="Sato K."/>
            <person name="Yoshida Y."/>
            <person name="Vardy L."/>
            <person name="Toda T."/>
        </authorList>
    </citation>
    <scope>NUCLEOTIDE SEQUENCE [GENOMIC DNA]</scope>
    <scope>FUNCTION</scope>
    <scope>INTERACTION WITH PRP2</scope>
    <source>
        <strain>972 / ATCC 24843</strain>
    </source>
</reference>
<reference key="3">
    <citation type="journal article" date="2002" name="Nature">
        <title>The genome sequence of Schizosaccharomyces pombe.</title>
        <authorList>
            <person name="Wood V."/>
            <person name="Gwilliam R."/>
            <person name="Rajandream M.A."/>
            <person name="Lyne M.H."/>
            <person name="Lyne R."/>
            <person name="Stewart A."/>
            <person name="Sgouros J.G."/>
            <person name="Peat N."/>
            <person name="Hayles J."/>
            <person name="Baker S.G."/>
            <person name="Basham D."/>
            <person name="Bowman S."/>
            <person name="Brooks K."/>
            <person name="Brown D."/>
            <person name="Brown S."/>
            <person name="Chillingworth T."/>
            <person name="Churcher C.M."/>
            <person name="Collins M."/>
            <person name="Connor R."/>
            <person name="Cronin A."/>
            <person name="Davis P."/>
            <person name="Feltwell T."/>
            <person name="Fraser A."/>
            <person name="Gentles S."/>
            <person name="Goble A."/>
            <person name="Hamlin N."/>
            <person name="Harris D.E."/>
            <person name="Hidalgo J."/>
            <person name="Hodgson G."/>
            <person name="Holroyd S."/>
            <person name="Hornsby T."/>
            <person name="Howarth S."/>
            <person name="Huckle E.J."/>
            <person name="Hunt S."/>
            <person name="Jagels K."/>
            <person name="James K.D."/>
            <person name="Jones L."/>
            <person name="Jones M."/>
            <person name="Leather S."/>
            <person name="McDonald S."/>
            <person name="McLean J."/>
            <person name="Mooney P."/>
            <person name="Moule S."/>
            <person name="Mungall K.L."/>
            <person name="Murphy L.D."/>
            <person name="Niblett D."/>
            <person name="Odell C."/>
            <person name="Oliver K."/>
            <person name="O'Neil S."/>
            <person name="Pearson D."/>
            <person name="Quail M.A."/>
            <person name="Rabbinowitsch E."/>
            <person name="Rutherford K.M."/>
            <person name="Rutter S."/>
            <person name="Saunders D."/>
            <person name="Seeger K."/>
            <person name="Sharp S."/>
            <person name="Skelton J."/>
            <person name="Simmonds M.N."/>
            <person name="Squares R."/>
            <person name="Squares S."/>
            <person name="Stevens K."/>
            <person name="Taylor K."/>
            <person name="Taylor R.G."/>
            <person name="Tivey A."/>
            <person name="Walsh S.V."/>
            <person name="Warren T."/>
            <person name="Whitehead S."/>
            <person name="Woodward J.R."/>
            <person name="Volckaert G."/>
            <person name="Aert R."/>
            <person name="Robben J."/>
            <person name="Grymonprez B."/>
            <person name="Weltjens I."/>
            <person name="Vanstreels E."/>
            <person name="Rieger M."/>
            <person name="Schaefer M."/>
            <person name="Mueller-Auer S."/>
            <person name="Gabel C."/>
            <person name="Fuchs M."/>
            <person name="Duesterhoeft A."/>
            <person name="Fritzc C."/>
            <person name="Holzer E."/>
            <person name="Moestl D."/>
            <person name="Hilbert H."/>
            <person name="Borzym K."/>
            <person name="Langer I."/>
            <person name="Beck A."/>
            <person name="Lehrach H."/>
            <person name="Reinhardt R."/>
            <person name="Pohl T.M."/>
            <person name="Eger P."/>
            <person name="Zimmermann W."/>
            <person name="Wedler H."/>
            <person name="Wambutt R."/>
            <person name="Purnelle B."/>
            <person name="Goffeau A."/>
            <person name="Cadieu E."/>
            <person name="Dreano S."/>
            <person name="Gloux S."/>
            <person name="Lelaure V."/>
            <person name="Mottier S."/>
            <person name="Galibert F."/>
            <person name="Aves S.J."/>
            <person name="Xiang Z."/>
            <person name="Hunt C."/>
            <person name="Moore K."/>
            <person name="Hurst S.M."/>
            <person name="Lucas M."/>
            <person name="Rochet M."/>
            <person name="Gaillardin C."/>
            <person name="Tallada V.A."/>
            <person name="Garzon A."/>
            <person name="Thode G."/>
            <person name="Daga R.R."/>
            <person name="Cruzado L."/>
            <person name="Jimenez J."/>
            <person name="Sanchez M."/>
            <person name="del Rey F."/>
            <person name="Benito J."/>
            <person name="Dominguez A."/>
            <person name="Revuelta J.L."/>
            <person name="Moreno S."/>
            <person name="Armstrong J."/>
            <person name="Forsburg S.L."/>
            <person name="Cerutti L."/>
            <person name="Lowe T."/>
            <person name="McCombie W.R."/>
            <person name="Paulsen I."/>
            <person name="Potashkin J."/>
            <person name="Shpakovski G.V."/>
            <person name="Ussery D."/>
            <person name="Barrell B.G."/>
            <person name="Nurse P."/>
        </authorList>
    </citation>
    <scope>NUCLEOTIDE SEQUENCE [LARGE SCALE GENOMIC DNA]</scope>
    <source>
        <strain>972 / ATCC 24843</strain>
    </source>
</reference>
<reference key="4">
    <citation type="journal article" date="2006" name="J. Cell Sci.">
        <title>Fission yeast Tor2 promotes cell growth and represses cell differentiation.</title>
        <authorList>
            <person name="Alvarez B."/>
            <person name="Moreno S."/>
        </authorList>
    </citation>
    <scope>FUNCTION</scope>
    <scope>INTERACTION WITH TOR1 AND TOR2</scope>
</reference>
<reference key="5">
    <citation type="journal article" date="2006" name="Nat. Biotechnol.">
        <title>ORFeome cloning and global analysis of protein localization in the fission yeast Schizosaccharomyces pombe.</title>
        <authorList>
            <person name="Matsuyama A."/>
            <person name="Arai R."/>
            <person name="Yashiroda Y."/>
            <person name="Shirai A."/>
            <person name="Kamata A."/>
            <person name="Sekido S."/>
            <person name="Kobayashi Y."/>
            <person name="Hashimoto A."/>
            <person name="Hamamoto M."/>
            <person name="Hiraoka Y."/>
            <person name="Horinouchi S."/>
            <person name="Yoshida M."/>
        </authorList>
    </citation>
    <scope>SUBCELLULAR LOCATION [LARGE SCALE ANALYSIS]</scope>
</reference>
<reference key="6">
    <citation type="journal article" date="2007" name="Genes Cells">
        <title>Rapamycin sensitivity of the Schizosaccharomyces pombe tor2 mutant and organization of two highly phosphorylated TOR complexes by specific and common subunits.</title>
        <authorList>
            <person name="Hayashi T."/>
            <person name="Hatanaka M."/>
            <person name="Nagao K."/>
            <person name="Nakaseko Y."/>
            <person name="Kanoh J."/>
            <person name="Kokubu A."/>
            <person name="Ebe M."/>
            <person name="Yanagida M."/>
        </authorList>
    </citation>
    <scope>IDENTIFICATION IN THE TORC1 AND THE TORC2 COMPLEXES</scope>
    <scope>PHOSPHORYLATION AT SER-141</scope>
    <scope>IDENTIFICATION BY MASS SPECTROMETRY</scope>
</reference>
<reference key="7">
    <citation type="journal article" date="2007" name="Mol. Cell. Biol.">
        <title>Loss of the TOR kinase Tor2 mimics nitrogen starvation and activates the sexual development pathway in fission yeast.</title>
        <authorList>
            <person name="Matsuo T."/>
            <person name="Otsubo Y."/>
            <person name="Urano J."/>
            <person name="Tamanoi F."/>
            <person name="Yamamoto M."/>
        </authorList>
    </citation>
    <scope>FUNCTION</scope>
    <scope>INTERACTION WITH TOR1 AND TOR2</scope>
</reference>
<sequence length="314" mass="35133">MSVQYPPQHSVLLVSSGYDHTIRFWEALSGICSRTIQHADSQVNRLCISPDKKFLAAAGNPHVRLYDINTSSQMPLMTFEGHTNNVTAIAFHCDGKWLATSSEDGTVKVWDMRAPSVQRNYDHKSPVNDLLIHPNQGELLSCDQSGRVRAWDLGENSCTHELIPEEDVPMSSITVGSDGSMLIAGNNKGNCYVWRMLNHQGASLLQPVVKFQAHQRYITRCVLSPDVKHLATCSADATVNIWSTEDMSFMLERRLQGHQRWVWDCAFSADSTYLVTASSDHVARLWELSSGETIRQYSGHHKAAVCVALNDYQI</sequence>
<dbReference type="EMBL" id="AB016895">
    <property type="protein sequence ID" value="BAA32427.1"/>
    <property type="molecule type" value="Genomic_DNA"/>
</dbReference>
<dbReference type="EMBL" id="CU329671">
    <property type="protein sequence ID" value="CAB57925.1"/>
    <property type="molecule type" value="Genomic_DNA"/>
</dbReference>
<dbReference type="PIR" id="T39922">
    <property type="entry name" value="T39922"/>
</dbReference>
<dbReference type="RefSeq" id="NP_595682.1">
    <property type="nucleotide sequence ID" value="NM_001021577.2"/>
</dbReference>
<dbReference type="SMR" id="O74184"/>
<dbReference type="BioGRID" id="277170">
    <property type="interactions" value="20"/>
</dbReference>
<dbReference type="FunCoup" id="O74184">
    <property type="interactions" value="328"/>
</dbReference>
<dbReference type="IntAct" id="O74184">
    <property type="interactions" value="5"/>
</dbReference>
<dbReference type="STRING" id="284812.O74184"/>
<dbReference type="iPTMnet" id="O74184"/>
<dbReference type="PaxDb" id="4896-SPBC21B10.05c.1"/>
<dbReference type="EnsemblFungi" id="SPBC21B10.05c.1">
    <property type="protein sequence ID" value="SPBC21B10.05c.1:pep"/>
    <property type="gene ID" value="SPBC21B10.05c"/>
</dbReference>
<dbReference type="GeneID" id="2540645"/>
<dbReference type="KEGG" id="spo:2540645"/>
<dbReference type="PomBase" id="SPBC21B10.05c">
    <property type="gene designation" value="pop3"/>
</dbReference>
<dbReference type="VEuPathDB" id="FungiDB:SPBC21B10.05c"/>
<dbReference type="eggNOG" id="KOG0315">
    <property type="taxonomic scope" value="Eukaryota"/>
</dbReference>
<dbReference type="HOGENOM" id="CLU_000288_57_5_1"/>
<dbReference type="InParanoid" id="O74184"/>
<dbReference type="OMA" id="VQRNYKH"/>
<dbReference type="PhylomeDB" id="O74184"/>
<dbReference type="Reactome" id="R-SPO-1257604">
    <property type="pathway name" value="PIP3 activates AKT signaling"/>
</dbReference>
<dbReference type="Reactome" id="R-SPO-3371571">
    <property type="pathway name" value="HSF1-dependent transactivation"/>
</dbReference>
<dbReference type="Reactome" id="R-SPO-389357">
    <property type="pathway name" value="CD28 dependent PI3K/Akt signaling"/>
</dbReference>
<dbReference type="Reactome" id="R-SPO-5218920">
    <property type="pathway name" value="VEGFR2 mediated vascular permeability"/>
</dbReference>
<dbReference type="Reactome" id="R-SPO-6804757">
    <property type="pathway name" value="Regulation of TP53 Degradation"/>
</dbReference>
<dbReference type="Reactome" id="R-SPO-9639288">
    <property type="pathway name" value="Amino acids regulate mTORC1"/>
</dbReference>
<dbReference type="Reactome" id="R-SPO-9856530">
    <property type="pathway name" value="High laminar flow shear stress activates signaling by PIEZO1 and PECAM1:CDH5:KDR in endothelial cells"/>
</dbReference>
<dbReference type="PRO" id="PR:O74184"/>
<dbReference type="Proteomes" id="UP000002485">
    <property type="component" value="Chromosome II"/>
</dbReference>
<dbReference type="GO" id="GO:0005829">
    <property type="term" value="C:cytosol"/>
    <property type="evidence" value="ECO:0007005"/>
    <property type="project" value="PomBase"/>
</dbReference>
<dbReference type="GO" id="GO:0000329">
    <property type="term" value="C:fungal-type vacuole membrane"/>
    <property type="evidence" value="ECO:0000314"/>
    <property type="project" value="PomBase"/>
</dbReference>
<dbReference type="GO" id="GO:0005634">
    <property type="term" value="C:nucleus"/>
    <property type="evidence" value="ECO:0007005"/>
    <property type="project" value="PomBase"/>
</dbReference>
<dbReference type="GO" id="GO:0031931">
    <property type="term" value="C:TORC1 complex"/>
    <property type="evidence" value="ECO:0000314"/>
    <property type="project" value="PomBase"/>
</dbReference>
<dbReference type="GO" id="GO:0031932">
    <property type="term" value="C:TORC2 complex"/>
    <property type="evidence" value="ECO:0000314"/>
    <property type="project" value="PomBase"/>
</dbReference>
<dbReference type="GO" id="GO:0051321">
    <property type="term" value="P:meiotic cell cycle"/>
    <property type="evidence" value="ECO:0007669"/>
    <property type="project" value="UniProtKB-KW"/>
</dbReference>
<dbReference type="GO" id="GO:0032956">
    <property type="term" value="P:regulation of actin cytoskeleton organization"/>
    <property type="evidence" value="ECO:0000318"/>
    <property type="project" value="GO_Central"/>
</dbReference>
<dbReference type="GO" id="GO:0030435">
    <property type="term" value="P:sporulation resulting in formation of a cellular spore"/>
    <property type="evidence" value="ECO:0007669"/>
    <property type="project" value="UniProtKB-KW"/>
</dbReference>
<dbReference type="GO" id="GO:0031929">
    <property type="term" value="P:TOR signaling"/>
    <property type="evidence" value="ECO:0000318"/>
    <property type="project" value="GO_Central"/>
</dbReference>
<dbReference type="GO" id="GO:0038202">
    <property type="term" value="P:TORC1 signaling"/>
    <property type="evidence" value="ECO:0000315"/>
    <property type="project" value="PomBase"/>
</dbReference>
<dbReference type="GO" id="GO:0038203">
    <property type="term" value="P:TORC2 signaling"/>
    <property type="evidence" value="ECO:0000269"/>
    <property type="project" value="PomBase"/>
</dbReference>
<dbReference type="CDD" id="cd00200">
    <property type="entry name" value="WD40"/>
    <property type="match status" value="1"/>
</dbReference>
<dbReference type="FunFam" id="2.130.10.10:FF:000339">
    <property type="entry name" value="WD-repeat protein pop3"/>
    <property type="match status" value="1"/>
</dbReference>
<dbReference type="Gene3D" id="2.130.10.10">
    <property type="entry name" value="YVTN repeat-like/Quinoprotein amine dehydrogenase"/>
    <property type="match status" value="1"/>
</dbReference>
<dbReference type="InterPro" id="IPR020472">
    <property type="entry name" value="G-protein_beta_WD-40_rep"/>
</dbReference>
<dbReference type="InterPro" id="IPR037588">
    <property type="entry name" value="MLST8"/>
</dbReference>
<dbReference type="InterPro" id="IPR015943">
    <property type="entry name" value="WD40/YVTN_repeat-like_dom_sf"/>
</dbReference>
<dbReference type="InterPro" id="IPR019775">
    <property type="entry name" value="WD40_repeat_CS"/>
</dbReference>
<dbReference type="InterPro" id="IPR036322">
    <property type="entry name" value="WD40_repeat_dom_sf"/>
</dbReference>
<dbReference type="InterPro" id="IPR001680">
    <property type="entry name" value="WD40_rpt"/>
</dbReference>
<dbReference type="PANTHER" id="PTHR19842">
    <property type="entry name" value="G BETA-LIKE PROTEIN GBL"/>
    <property type="match status" value="1"/>
</dbReference>
<dbReference type="PANTHER" id="PTHR19842:SF0">
    <property type="entry name" value="TARGET OF RAPAMYCIN COMPLEX SUBUNIT LST8"/>
    <property type="match status" value="1"/>
</dbReference>
<dbReference type="Pfam" id="PF00400">
    <property type="entry name" value="WD40"/>
    <property type="match status" value="6"/>
</dbReference>
<dbReference type="PRINTS" id="PR00320">
    <property type="entry name" value="GPROTEINBRPT"/>
</dbReference>
<dbReference type="SMART" id="SM00320">
    <property type="entry name" value="WD40"/>
    <property type="match status" value="6"/>
</dbReference>
<dbReference type="SUPFAM" id="SSF50978">
    <property type="entry name" value="WD40 repeat-like"/>
    <property type="match status" value="1"/>
</dbReference>
<dbReference type="PROSITE" id="PS00678">
    <property type="entry name" value="WD_REPEATS_1"/>
    <property type="match status" value="3"/>
</dbReference>
<dbReference type="PROSITE" id="PS50082">
    <property type="entry name" value="WD_REPEATS_2"/>
    <property type="match status" value="5"/>
</dbReference>
<dbReference type="PROSITE" id="PS50294">
    <property type="entry name" value="WD_REPEATS_REGION"/>
    <property type="match status" value="1"/>
</dbReference>